<reference key="1">
    <citation type="journal article" date="1987" name="Arch. Biochem. Biophys.">
        <title>Developmental pattern of the expression of malonyl-CoA decarboxylase gene and the production of unique lipids in the goose uropygial glands.</title>
        <authorList>
            <person name="Kolattukudy P.E."/>
            <person name="Rogers L.M."/>
            <person name="Poulose A.J."/>
            <person name="Jang S.H."/>
            <person name="Kim Y.S."/>
            <person name="Cheesbrough T.M."/>
            <person name="Liggitt D.H."/>
        </authorList>
    </citation>
    <scope>NUCLEOTIDE SEQUENCE [MRNA]</scope>
</reference>
<accession>P63256</accession>
<accession>P02571</accession>
<accession>P14104</accession>
<accession>P99022</accession>
<evidence type="ECO:0000250" key="1">
    <source>
        <dbReference type="UniProtKB" id="P63260"/>
    </source>
</evidence>
<evidence type="ECO:0000250" key="2">
    <source>
        <dbReference type="UniProtKB" id="P63261"/>
    </source>
</evidence>
<evidence type="ECO:0000250" key="3">
    <source>
        <dbReference type="UniProtKB" id="P68137"/>
    </source>
</evidence>
<evidence type="ECO:0000305" key="4"/>
<gene>
    <name type="primary">ACTG1</name>
    <name type="synonym">ACTG</name>
</gene>
<comment type="function">
    <text evidence="2">Actins are highly conserved proteins that are involved in various types of cell motility and are ubiquitously expressed in all eukaryotic cells.</text>
</comment>
<comment type="catalytic activity">
    <reaction evidence="3">
        <text>ATP + H2O = ADP + phosphate + H(+)</text>
        <dbReference type="Rhea" id="RHEA:13065"/>
        <dbReference type="ChEBI" id="CHEBI:15377"/>
        <dbReference type="ChEBI" id="CHEBI:15378"/>
        <dbReference type="ChEBI" id="CHEBI:30616"/>
        <dbReference type="ChEBI" id="CHEBI:43474"/>
        <dbReference type="ChEBI" id="CHEBI:456216"/>
    </reaction>
</comment>
<comment type="subunit">
    <text>Polymerization of globular actin (G-actin) leads to a structural filament (F-actin) in the form of a two-stranded helix. Each actin can bind to 4 others.</text>
</comment>
<comment type="subcellular location">
    <subcellularLocation>
        <location evidence="2">Cytoplasm</location>
        <location evidence="2">Cytoskeleton</location>
    </subcellularLocation>
</comment>
<comment type="PTM">
    <molecule>Actin, cytoplasmic 2</molecule>
    <text evidence="2">N-terminal cleavage of acetylated methionine of immature cytoplasmic actin by ACTMAP.</text>
</comment>
<comment type="PTM">
    <text evidence="1">Oxidation of Met-44 and Met-47 by MICALs (MICAL1, MICAL2 or MICAL3) to form methionine sulfoxide promotes actin filament depolymerization. MICAL1 and MICAL2 produce the (R)-S-oxide form. The (R)-S-oxide form is reverted by MSRB1 and MSRB2, which promote actin repolymerization.</text>
</comment>
<comment type="PTM">
    <text evidence="2">Methylated at His-73 by SETD3.</text>
</comment>
<comment type="miscellaneous">
    <text>In vertebrates 3 main groups of actin isoforms, alpha, beta and gamma have been identified. The alpha actins are found in muscle tissues and are a major constituent of the contractile apparatus. The beta and gamma actins coexist in most cell types as components of the cytoskeleton and as mediators of internal cell motility.</text>
</comment>
<comment type="similarity">
    <text evidence="4">Belongs to the actin family.</text>
</comment>
<comment type="caution">
    <text evidence="4">PubMed:3619442 incorrectly terms this protein to be beta-actin.</text>
</comment>
<dbReference type="EMBL" id="M26111">
    <property type="protein sequence ID" value="AAA49315.1"/>
    <property type="molecule type" value="mRNA"/>
</dbReference>
<dbReference type="PIR" id="A55001">
    <property type="entry name" value="A55001"/>
</dbReference>
<dbReference type="SMR" id="P63256"/>
<dbReference type="MINT" id="P63256"/>
<dbReference type="GO" id="GO:0005737">
    <property type="term" value="C:cytoplasm"/>
    <property type="evidence" value="ECO:0007669"/>
    <property type="project" value="UniProtKB-KW"/>
</dbReference>
<dbReference type="GO" id="GO:0005856">
    <property type="term" value="C:cytoskeleton"/>
    <property type="evidence" value="ECO:0007669"/>
    <property type="project" value="UniProtKB-SubCell"/>
</dbReference>
<dbReference type="GO" id="GO:0005524">
    <property type="term" value="F:ATP binding"/>
    <property type="evidence" value="ECO:0007669"/>
    <property type="project" value="UniProtKB-KW"/>
</dbReference>
<dbReference type="GO" id="GO:0016787">
    <property type="term" value="F:hydrolase activity"/>
    <property type="evidence" value="ECO:0007669"/>
    <property type="project" value="UniProtKB-KW"/>
</dbReference>
<dbReference type="CDD" id="cd10224">
    <property type="entry name" value="ASKHA_NBD_actin"/>
    <property type="match status" value="1"/>
</dbReference>
<dbReference type="FunFam" id="3.30.420.40:FF:000131">
    <property type="entry name" value="Actin, alpha skeletal muscle"/>
    <property type="match status" value="1"/>
</dbReference>
<dbReference type="FunFam" id="3.30.420.40:FF:000291">
    <property type="entry name" value="Actin, alpha skeletal muscle"/>
    <property type="match status" value="1"/>
</dbReference>
<dbReference type="FunFam" id="3.90.640.10:FF:000047">
    <property type="entry name" value="Actin, alpha skeletal muscle"/>
    <property type="match status" value="1"/>
</dbReference>
<dbReference type="FunFam" id="3.30.420.40:FF:000058">
    <property type="entry name" value="Putative actin-related protein 5"/>
    <property type="match status" value="1"/>
</dbReference>
<dbReference type="Gene3D" id="3.30.420.40">
    <property type="match status" value="2"/>
</dbReference>
<dbReference type="Gene3D" id="3.90.640.10">
    <property type="entry name" value="Actin, Chain A, domain 4"/>
    <property type="match status" value="1"/>
</dbReference>
<dbReference type="InterPro" id="IPR004000">
    <property type="entry name" value="Actin"/>
</dbReference>
<dbReference type="InterPro" id="IPR020902">
    <property type="entry name" value="Actin/actin-like_CS"/>
</dbReference>
<dbReference type="InterPro" id="IPR004001">
    <property type="entry name" value="Actin_CS"/>
</dbReference>
<dbReference type="InterPro" id="IPR043129">
    <property type="entry name" value="ATPase_NBD"/>
</dbReference>
<dbReference type="PANTHER" id="PTHR11937">
    <property type="entry name" value="ACTIN"/>
    <property type="match status" value="1"/>
</dbReference>
<dbReference type="Pfam" id="PF00022">
    <property type="entry name" value="Actin"/>
    <property type="match status" value="1"/>
</dbReference>
<dbReference type="PRINTS" id="PR00190">
    <property type="entry name" value="ACTIN"/>
</dbReference>
<dbReference type="SMART" id="SM00268">
    <property type="entry name" value="ACTIN"/>
    <property type="match status" value="1"/>
</dbReference>
<dbReference type="SUPFAM" id="SSF53067">
    <property type="entry name" value="Actin-like ATPase domain"/>
    <property type="match status" value="2"/>
</dbReference>
<dbReference type="PROSITE" id="PS00406">
    <property type="entry name" value="ACTINS_1"/>
    <property type="match status" value="1"/>
</dbReference>
<dbReference type="PROSITE" id="PS00432">
    <property type="entry name" value="ACTINS_2"/>
    <property type="match status" value="1"/>
</dbReference>
<dbReference type="PROSITE" id="PS01132">
    <property type="entry name" value="ACTINS_ACT_LIKE"/>
    <property type="match status" value="1"/>
</dbReference>
<organism>
    <name type="scientific">Anser anser anser</name>
    <name type="common">Western greylag goose</name>
    <dbReference type="NCBI Taxonomy" id="8844"/>
    <lineage>
        <taxon>Eukaryota</taxon>
        <taxon>Metazoa</taxon>
        <taxon>Chordata</taxon>
        <taxon>Craniata</taxon>
        <taxon>Vertebrata</taxon>
        <taxon>Euteleostomi</taxon>
        <taxon>Archelosauria</taxon>
        <taxon>Archosauria</taxon>
        <taxon>Dinosauria</taxon>
        <taxon>Saurischia</taxon>
        <taxon>Theropoda</taxon>
        <taxon>Coelurosauria</taxon>
        <taxon>Aves</taxon>
        <taxon>Neognathae</taxon>
        <taxon>Galloanserae</taxon>
        <taxon>Anseriformes</taxon>
        <taxon>Anatidae</taxon>
        <taxon>Anserinae</taxon>
        <taxon>Anser</taxon>
    </lineage>
</organism>
<feature type="chain" id="PRO_0000367104" description="Actin, cytoplasmic 2">
    <location>
        <begin position="1"/>
        <end position="375"/>
    </location>
</feature>
<feature type="initiator methionine" description="Removed; alternate" evidence="2">
    <location>
        <position position="1"/>
    </location>
</feature>
<feature type="chain" id="PRO_0000000839" description="Actin, cytoplasmic 2, N-terminally processed">
    <location>
        <begin position="2"/>
        <end position="375"/>
    </location>
</feature>
<feature type="modified residue" description="N-acetylmethionine; in Actin, cytoplasmic 2; alternate" evidence="2">
    <location>
        <position position="1"/>
    </location>
</feature>
<feature type="modified residue" description="N-acetylglutamate; in Actin, cytoplasmic 2, N-terminally processed" evidence="2">
    <location>
        <position position="2"/>
    </location>
</feature>
<feature type="modified residue" description="Methionine (R)-sulfoxide" evidence="1">
    <location>
        <position position="44"/>
    </location>
</feature>
<feature type="modified residue" description="Methionine (R)-sulfoxide" evidence="1">
    <location>
        <position position="47"/>
    </location>
</feature>
<feature type="modified residue" description="Tele-methylhistidine" evidence="1">
    <location>
        <position position="73"/>
    </location>
</feature>
<proteinExistence type="evidence at transcript level"/>
<protein>
    <recommendedName>
        <fullName>Actin, cytoplasmic 2</fullName>
    </recommendedName>
    <alternativeName>
        <fullName>Gamma-actin</fullName>
    </alternativeName>
    <component>
        <recommendedName>
            <fullName>Actin, cytoplasmic 2, N-terminally processed</fullName>
        </recommendedName>
    </component>
</protein>
<sequence length="375" mass="41878">MEEEIAALVIDNGSGMCKAGFGRDDAPRAVFPSIVGRPRHQGVMVGMGQKDSYVGDEAQSKRGILTLKYPIEHGIVTNWDDMEKIWHHTFYNELRVAPEEHPVLLTEAPLNPKANREKMTQIMFETFNTPAMYVAIQAVLSLYASGRTTGIVMDSGDGVTHTVPIYEGYALPHAILRLDLAGRDLTDYLMKILTERGYSFTTTAEREIVRDIKEKLCYVALDFEQEMATAASSSSLEKSYELPDGQVITIGNERFRCPEALFQPSFLGMESCGIHETTFNSIMKCDVDIRKDLYANTVLSGGTTMYPGIADRMQKEITALAPSTMKIKIIAPPERKYSVWIGGSILASLSTFQQMWISKQEYDESGPSIVHRKCF</sequence>
<name>ACTG_ANSAN</name>
<keyword id="KW-0007">Acetylation</keyword>
<keyword id="KW-0067">ATP-binding</keyword>
<keyword id="KW-0963">Cytoplasm</keyword>
<keyword id="KW-0206">Cytoskeleton</keyword>
<keyword id="KW-0378">Hydrolase</keyword>
<keyword id="KW-0488">Methylation</keyword>
<keyword id="KW-0547">Nucleotide-binding</keyword>
<keyword id="KW-0558">Oxidation</keyword>